<feature type="chain" id="PRO_0000280479" description="Rho GTPase-activating protein 30">
    <location>
        <begin position="1"/>
        <end position="1101"/>
    </location>
</feature>
<feature type="domain" description="Rho-GAP" evidence="3">
    <location>
        <begin position="20"/>
        <end position="215"/>
    </location>
</feature>
<feature type="region of interest" description="Disordered" evidence="4">
    <location>
        <begin position="305"/>
        <end position="397"/>
    </location>
</feature>
<feature type="region of interest" description="Disordered" evidence="4">
    <location>
        <begin position="450"/>
        <end position="499"/>
    </location>
</feature>
<feature type="region of interest" description="Disordered" evidence="4">
    <location>
        <begin position="622"/>
        <end position="848"/>
    </location>
</feature>
<feature type="region of interest" description="Disordered" evidence="4">
    <location>
        <begin position="878"/>
        <end position="901"/>
    </location>
</feature>
<feature type="region of interest" description="Disordered" evidence="4">
    <location>
        <begin position="968"/>
        <end position="987"/>
    </location>
</feature>
<feature type="region of interest" description="Disordered" evidence="4">
    <location>
        <begin position="1044"/>
        <end position="1076"/>
    </location>
</feature>
<feature type="compositionally biased region" description="Basic and acidic residues" evidence="4">
    <location>
        <begin position="309"/>
        <end position="319"/>
    </location>
</feature>
<feature type="compositionally biased region" description="Low complexity" evidence="4">
    <location>
        <begin position="348"/>
        <end position="367"/>
    </location>
</feature>
<feature type="compositionally biased region" description="Pro residues" evidence="4">
    <location>
        <begin position="451"/>
        <end position="465"/>
    </location>
</feature>
<feature type="compositionally biased region" description="Basic and acidic residues" evidence="4">
    <location>
        <begin position="659"/>
        <end position="677"/>
    </location>
</feature>
<feature type="compositionally biased region" description="Basic and acidic residues" evidence="4">
    <location>
        <begin position="686"/>
        <end position="762"/>
    </location>
</feature>
<feature type="compositionally biased region" description="Basic and acidic residues" evidence="4">
    <location>
        <begin position="786"/>
        <end position="821"/>
    </location>
</feature>
<feature type="compositionally biased region" description="Basic and acidic residues" evidence="4">
    <location>
        <begin position="829"/>
        <end position="844"/>
    </location>
</feature>
<feature type="compositionally biased region" description="Basic and acidic residues" evidence="4">
    <location>
        <begin position="1052"/>
        <end position="1064"/>
    </location>
</feature>
<feature type="site" description="Arginine finger; crucial for GTP hydrolysis by stabilizing the transition state" evidence="3">
    <location>
        <position position="55"/>
    </location>
</feature>
<feature type="modified residue" description="Phosphoserine" evidence="2">
    <location>
        <position position="578"/>
    </location>
</feature>
<feature type="modified residue" description="Phosphoserine" evidence="7 8">
    <location>
        <position position="875"/>
    </location>
</feature>
<feature type="modified residue" description="Phosphoserine" evidence="8">
    <location>
        <position position="996"/>
    </location>
</feature>
<feature type="splice variant" id="VSP_023736" description="In isoform 2." evidence="5">
    <location>
        <begin position="458"/>
        <end position="465"/>
    </location>
</feature>
<feature type="sequence conflict" description="In Ref. 3; BAD90129." evidence="6" ref="3">
    <original>S</original>
    <variation>C</variation>
    <location>
        <position position="455"/>
    </location>
</feature>
<feature type="sequence conflict" description="In Ref. 3; BAD90129." evidence="6" ref="3">
    <original>L</original>
    <variation>S</variation>
    <location>
        <position position="458"/>
    </location>
</feature>
<feature type="sequence conflict" description="In Ref. 3; BAD90129." evidence="6" ref="3">
    <original>PGSVGPLAS</original>
    <variation>GPGLGPGPP</variation>
    <location>
        <begin position="463"/>
        <end position="471"/>
    </location>
</feature>
<feature type="sequence conflict" description="In Ref. 3; BAD90129." evidence="6" ref="3">
    <original>E</original>
    <variation>V</variation>
    <location>
        <position position="684"/>
    </location>
</feature>
<feature type="sequence conflict" description="In Ref. 3; BAD90129." evidence="6" ref="3">
    <original>S</original>
    <variation>G</variation>
    <location>
        <position position="799"/>
    </location>
</feature>
<feature type="sequence conflict" description="In Ref. 3; BAD90129." evidence="6" ref="3">
    <original>T</original>
    <variation>I</variation>
    <location>
        <position position="801"/>
    </location>
</feature>
<feature type="sequence conflict" description="In Ref. 3; BAD90129." evidence="6" ref="3">
    <original>L</original>
    <variation>R</variation>
    <location>
        <position position="1016"/>
    </location>
</feature>
<feature type="sequence conflict" description="In Ref. 3; BAD90129." evidence="6" ref="3">
    <original>S</original>
    <variation>N</variation>
    <location>
        <position position="1030"/>
    </location>
</feature>
<reference key="1">
    <citation type="journal article" date="2009" name="PLoS Biol.">
        <title>Lineage-specific biology revealed by a finished genome assembly of the mouse.</title>
        <authorList>
            <person name="Church D.M."/>
            <person name="Goodstadt L."/>
            <person name="Hillier L.W."/>
            <person name="Zody M.C."/>
            <person name="Goldstein S."/>
            <person name="She X."/>
            <person name="Bult C.J."/>
            <person name="Agarwala R."/>
            <person name="Cherry J.L."/>
            <person name="DiCuccio M."/>
            <person name="Hlavina W."/>
            <person name="Kapustin Y."/>
            <person name="Meric P."/>
            <person name="Maglott D."/>
            <person name="Birtle Z."/>
            <person name="Marques A.C."/>
            <person name="Graves T."/>
            <person name="Zhou S."/>
            <person name="Teague B."/>
            <person name="Potamousis K."/>
            <person name="Churas C."/>
            <person name="Place M."/>
            <person name="Herschleb J."/>
            <person name="Runnheim R."/>
            <person name="Forrest D."/>
            <person name="Amos-Landgraf J."/>
            <person name="Schwartz D.C."/>
            <person name="Cheng Z."/>
            <person name="Lindblad-Toh K."/>
            <person name="Eichler E.E."/>
            <person name="Ponting C.P."/>
        </authorList>
    </citation>
    <scope>NUCLEOTIDE SEQUENCE [LARGE SCALE GENOMIC DNA]</scope>
    <source>
        <strain>C57BL/6J</strain>
    </source>
</reference>
<reference key="2">
    <citation type="journal article" date="2004" name="Genome Res.">
        <title>The status, quality, and expansion of the NIH full-length cDNA project: the Mammalian Gene Collection (MGC).</title>
        <authorList>
            <consortium name="The MGC Project Team"/>
        </authorList>
    </citation>
    <scope>NUCLEOTIDE SEQUENCE [LARGE SCALE MRNA] (ISOFORM 1)</scope>
    <source>
        <strain>C57BL/6J</strain>
        <tissue>Eye</tissue>
    </source>
</reference>
<reference key="3">
    <citation type="journal article" date="2004" name="DNA Res.">
        <title>Prediction of the coding sequences of mouse homologues of FLJ genes: the complete nucleotide sequences of 110 mouse FLJ-homologous cDNAs identified by screening of terminal sequences of cDNA clones randomly sampled from size-fractionated libraries.</title>
        <authorList>
            <person name="Okazaki N."/>
            <person name="Kikuno R."/>
            <person name="Ohara R."/>
            <person name="Inamoto S."/>
            <person name="Koseki H."/>
            <person name="Hiraoka S."/>
            <person name="Saga Y."/>
            <person name="Kitamura H."/>
            <person name="Nakagawa T."/>
            <person name="Nagase T."/>
            <person name="Ohara O."/>
            <person name="Koga H."/>
        </authorList>
    </citation>
    <scope>NUCLEOTIDE SEQUENCE [LARGE SCALE MRNA] OF 188-1101 (ISOFORM 2)</scope>
</reference>
<reference key="4">
    <citation type="journal article" date="2009" name="Immunity">
        <title>The phagosomal proteome in interferon-gamma-activated macrophages.</title>
        <authorList>
            <person name="Trost M."/>
            <person name="English L."/>
            <person name="Lemieux S."/>
            <person name="Courcelles M."/>
            <person name="Desjardins M."/>
            <person name="Thibault P."/>
        </authorList>
    </citation>
    <scope>PHOSPHORYLATION [LARGE SCALE ANALYSIS] AT SER-875</scope>
    <scope>IDENTIFICATION BY MASS SPECTROMETRY [LARGE SCALE ANALYSIS]</scope>
</reference>
<reference key="5">
    <citation type="journal article" date="2010" name="Cell">
        <title>A tissue-specific atlas of mouse protein phosphorylation and expression.</title>
        <authorList>
            <person name="Huttlin E.L."/>
            <person name="Jedrychowski M.P."/>
            <person name="Elias J.E."/>
            <person name="Goswami T."/>
            <person name="Rad R."/>
            <person name="Beausoleil S.A."/>
            <person name="Villen J."/>
            <person name="Haas W."/>
            <person name="Sowa M.E."/>
            <person name="Gygi S.P."/>
        </authorList>
    </citation>
    <scope>PHOSPHORYLATION [LARGE SCALE ANALYSIS] AT SER-875 AND SER-996</scope>
    <scope>IDENTIFICATION BY MASS SPECTROMETRY [LARGE SCALE ANALYSIS]</scope>
    <source>
        <tissue>Kidney</tissue>
        <tissue>Lung</tissue>
        <tissue>Spleen</tissue>
    </source>
</reference>
<keyword id="KW-0025">Alternative splicing</keyword>
<keyword id="KW-0968">Cytoplasmic vesicle</keyword>
<keyword id="KW-0343">GTPase activation</keyword>
<keyword id="KW-0597">Phosphoprotein</keyword>
<keyword id="KW-1185">Reference proteome</keyword>
<evidence type="ECO:0000250" key="1"/>
<evidence type="ECO:0000250" key="2">
    <source>
        <dbReference type="UniProtKB" id="Q7Z6I6"/>
    </source>
</evidence>
<evidence type="ECO:0000255" key="3">
    <source>
        <dbReference type="PROSITE-ProRule" id="PRU00172"/>
    </source>
</evidence>
<evidence type="ECO:0000256" key="4">
    <source>
        <dbReference type="SAM" id="MobiDB-lite"/>
    </source>
</evidence>
<evidence type="ECO:0000303" key="5">
    <source>
    </source>
</evidence>
<evidence type="ECO:0000305" key="6"/>
<evidence type="ECO:0007744" key="7">
    <source>
    </source>
</evidence>
<evidence type="ECO:0007744" key="8">
    <source>
    </source>
</evidence>
<sequence length="1101" mass="120114">MKSRQKGKKKGSSKERVFGCDLREHLQHSGQEVPQVLRSCAEFVQEYGVVDGIYRLSGVSSNIQKLRQEFETERKPDLRRDVYLQDIHCVSSLCKAYFRELPDPLLTYRLYDKFAEAVAVQLEPERLVKILEVLQELPIQNYRTLEFLMRHLVHMASFSAQTNMHARNLAIVWAPNLLRSKDIEASGFNGTAAFMEVRVQSIVVEFILTHVDQLFRGDSLSAGVDLESGWKSLPGARASGSSEDLMPTSLPYHLPSILQAGDGPPQIRPYHTIIEIAEHKRKGSLKVRKWRSIFNLGRSGHETKRKLPLRVEDREEKSSKGTLRPAKSMDSLSAAAGASDEPEGLVGSSSSQPSSLMPESLESNSMEGEQEPEAEAPGSANSEPGTPRAGRSAVRALGSSRAERCAGVHISDPYNVNLPLHITSILSVPPNIISNVSLVRLTRGLECPALQPRPSPALGPGPPGSVGPLASDEKSEARSVPGPLDDSSPAAMTPALEDSLSQEVQDSFSFLEDLSSSEPEWVGVEEREVAKAEAAGAAGAAAFSLGEDDPGMGYLEELLRVGPQVEEFSVEPPLDDLSLDDTQYVLAPNCCSLDSAVSTPDVEEDYGEEVFLSAYDDLSPLLGPKPINWEGVGSLEEEAAGCGKQPPTQDEEEQACSETRQEKEAKPRSTSDNREEAEATPETEMEAGKADAEGGEAERSQKVMDSFKEGSREELEAKEENSEGREVESIKETKDVEKIIGEPGKDEEREIGREEGAEKGDDTPVDSDMDPEHVFQEDLVLEESWEVVHKHEAEKGRESETKELRRKSDLKSREDQGHSEDSGSPEEGDDRKEGVFSKEQKSIDVETEVMRGVGDHLEEGALSEGPGVELLRVDSTEEINEQTSEMKQAPLQPSEPEGMEAEGQLNPETCDLYSCPCGSAGGVGMRLASTLVQVRQVRSVPVVPPKPQFAKMPSAMCSKIHVAPASPCPRPGRLDGTPGEKAWGSRASWRNGGSLSFDAAVALARERQRTESQGVLRTQTCTGGGDYSLSSRTPPCSMILAHSSRPLSCLERPPEGTEGSEPRSRLSLPPRELHPVVPLVAPQRQTYAFETQTNHGKDEGV</sequence>
<dbReference type="EMBL" id="AC087229">
    <property type="status" value="NOT_ANNOTATED_CDS"/>
    <property type="molecule type" value="Genomic_DNA"/>
</dbReference>
<dbReference type="EMBL" id="BC082573">
    <property type="protein sequence ID" value="AAH82573.1"/>
    <property type="molecule type" value="mRNA"/>
</dbReference>
<dbReference type="EMBL" id="AK220204">
    <property type="protein sequence ID" value="BAD90129.1"/>
    <property type="molecule type" value="mRNA"/>
</dbReference>
<dbReference type="CCDS" id="CCDS15494.1">
    <molecule id="Q640N3-2"/>
</dbReference>
<dbReference type="RefSeq" id="NP_001005508.2">
    <property type="nucleotide sequence ID" value="NM_001005508.2"/>
</dbReference>
<dbReference type="SMR" id="Q640N3"/>
<dbReference type="BioGRID" id="230542">
    <property type="interactions" value="52"/>
</dbReference>
<dbReference type="FunCoup" id="Q640N3">
    <property type="interactions" value="1041"/>
</dbReference>
<dbReference type="IntAct" id="Q640N3">
    <property type="interactions" value="27"/>
</dbReference>
<dbReference type="STRING" id="10090.ENSMUSP00000059389"/>
<dbReference type="GlyGen" id="Q640N3">
    <property type="glycosylation" value="1 site, 1 O-linked glycan (1 site)"/>
</dbReference>
<dbReference type="iPTMnet" id="Q640N3"/>
<dbReference type="PhosphoSitePlus" id="Q640N3"/>
<dbReference type="SwissPalm" id="Q640N3"/>
<dbReference type="jPOST" id="Q640N3"/>
<dbReference type="PaxDb" id="10090-ENSMUSP00000059389"/>
<dbReference type="ProteomicsDB" id="255334">
    <molecule id="Q640N3-1"/>
</dbReference>
<dbReference type="ProteomicsDB" id="255335">
    <molecule id="Q640N3-2"/>
</dbReference>
<dbReference type="DNASU" id="226652"/>
<dbReference type="GeneID" id="226652"/>
<dbReference type="KEGG" id="mmu:226652"/>
<dbReference type="AGR" id="MGI:2684948"/>
<dbReference type="CTD" id="257106"/>
<dbReference type="MGI" id="MGI:2684948">
    <property type="gene designation" value="Arhgap30"/>
</dbReference>
<dbReference type="eggNOG" id="KOG1449">
    <property type="taxonomic scope" value="Eukaryota"/>
</dbReference>
<dbReference type="InParanoid" id="Q640N3"/>
<dbReference type="OrthoDB" id="79452at2759"/>
<dbReference type="Reactome" id="R-MMU-8980692">
    <property type="pathway name" value="RHOA GTPase cycle"/>
</dbReference>
<dbReference type="Reactome" id="R-MMU-9013148">
    <property type="pathway name" value="CDC42 GTPase cycle"/>
</dbReference>
<dbReference type="Reactome" id="R-MMU-9013149">
    <property type="pathway name" value="RAC1 GTPase cycle"/>
</dbReference>
<dbReference type="Reactome" id="R-MMU-9013420">
    <property type="pathway name" value="RHOU GTPase cycle"/>
</dbReference>
<dbReference type="BioGRID-ORCS" id="226652">
    <property type="hits" value="6 hits in 77 CRISPR screens"/>
</dbReference>
<dbReference type="ChiTaRS" id="Arhgap30">
    <property type="organism name" value="mouse"/>
</dbReference>
<dbReference type="PRO" id="PR:Q640N3"/>
<dbReference type="Proteomes" id="UP000000589">
    <property type="component" value="Unplaced"/>
</dbReference>
<dbReference type="RNAct" id="Q640N3">
    <property type="molecule type" value="protein"/>
</dbReference>
<dbReference type="GO" id="GO:0031410">
    <property type="term" value="C:cytoplasmic vesicle"/>
    <property type="evidence" value="ECO:0007669"/>
    <property type="project" value="UniProtKB-KW"/>
</dbReference>
<dbReference type="GO" id="GO:0005096">
    <property type="term" value="F:GTPase activator activity"/>
    <property type="evidence" value="ECO:0007669"/>
    <property type="project" value="UniProtKB-KW"/>
</dbReference>
<dbReference type="GO" id="GO:0007165">
    <property type="term" value="P:signal transduction"/>
    <property type="evidence" value="ECO:0007669"/>
    <property type="project" value="InterPro"/>
</dbReference>
<dbReference type="CDD" id="cd04384">
    <property type="entry name" value="RhoGAP_CdGAP"/>
    <property type="match status" value="1"/>
</dbReference>
<dbReference type="FunFam" id="1.10.555.10:FF:000002">
    <property type="entry name" value="rho GTPase-activating protein 32 isoform X1"/>
    <property type="match status" value="1"/>
</dbReference>
<dbReference type="Gene3D" id="1.10.555.10">
    <property type="entry name" value="Rho GTPase activation protein"/>
    <property type="match status" value="1"/>
</dbReference>
<dbReference type="InterPro" id="IPR051576">
    <property type="entry name" value="PX-Rho_GAP"/>
</dbReference>
<dbReference type="InterPro" id="IPR008936">
    <property type="entry name" value="Rho_GTPase_activation_prot"/>
</dbReference>
<dbReference type="InterPro" id="IPR000198">
    <property type="entry name" value="RhoGAP_dom"/>
</dbReference>
<dbReference type="PANTHER" id="PTHR15729">
    <property type="entry name" value="CDC42 GTPASE-ACTIVATING PROTEIN"/>
    <property type="match status" value="1"/>
</dbReference>
<dbReference type="PANTHER" id="PTHR15729:SF12">
    <property type="entry name" value="RHO GTPASE-ACTIVATING PROTEIN 30"/>
    <property type="match status" value="1"/>
</dbReference>
<dbReference type="Pfam" id="PF00620">
    <property type="entry name" value="RhoGAP"/>
    <property type="match status" value="1"/>
</dbReference>
<dbReference type="SMART" id="SM00324">
    <property type="entry name" value="RhoGAP"/>
    <property type="match status" value="1"/>
</dbReference>
<dbReference type="SUPFAM" id="SSF48350">
    <property type="entry name" value="GTPase activation domain, GAP"/>
    <property type="match status" value="1"/>
</dbReference>
<dbReference type="PROSITE" id="PS50238">
    <property type="entry name" value="RHOGAP"/>
    <property type="match status" value="1"/>
</dbReference>
<organism>
    <name type="scientific">Mus musculus</name>
    <name type="common">Mouse</name>
    <dbReference type="NCBI Taxonomy" id="10090"/>
    <lineage>
        <taxon>Eukaryota</taxon>
        <taxon>Metazoa</taxon>
        <taxon>Chordata</taxon>
        <taxon>Craniata</taxon>
        <taxon>Vertebrata</taxon>
        <taxon>Euteleostomi</taxon>
        <taxon>Mammalia</taxon>
        <taxon>Eutheria</taxon>
        <taxon>Euarchontoglires</taxon>
        <taxon>Glires</taxon>
        <taxon>Rodentia</taxon>
        <taxon>Myomorpha</taxon>
        <taxon>Muroidea</taxon>
        <taxon>Muridae</taxon>
        <taxon>Murinae</taxon>
        <taxon>Mus</taxon>
        <taxon>Mus</taxon>
    </lineage>
</organism>
<gene>
    <name type="primary">Arhgap30</name>
</gene>
<protein>
    <recommendedName>
        <fullName>Rho GTPase-activating protein 30</fullName>
    </recommendedName>
    <alternativeName>
        <fullName>Rho-type GTPase-activating protein 30</fullName>
    </alternativeName>
</protein>
<accession>Q640N3</accession>
<accession>E9QKX0</accession>
<accession>Q571I5</accession>
<proteinExistence type="evidence at protein level"/>
<name>RHG30_MOUSE</name>
<comment type="function">
    <text evidence="1">GTPase-activating protein (GAP) for RAC1 and RHOA, but not for CDC42.</text>
</comment>
<comment type="subunit">
    <text evidence="1">Interacts with RHOU in a GTP-independent manner.</text>
</comment>
<comment type="subcellular location">
    <subcellularLocation>
        <location evidence="1">Cytoplasmic vesicle</location>
    </subcellularLocation>
</comment>
<comment type="alternative products">
    <event type="alternative splicing"/>
    <isoform>
        <id>Q640N3-1</id>
        <name>1</name>
        <sequence type="displayed"/>
    </isoform>
    <isoform>
        <id>Q640N3-2</id>
        <name>2</name>
        <sequence type="described" ref="VSP_023736"/>
    </isoform>
</comment>